<organism>
    <name type="scientific">Francisella tularensis subsp. tularensis (strain SCHU S4 / Schu 4)</name>
    <dbReference type="NCBI Taxonomy" id="177416"/>
    <lineage>
        <taxon>Bacteria</taxon>
        <taxon>Pseudomonadati</taxon>
        <taxon>Pseudomonadota</taxon>
        <taxon>Gammaproteobacteria</taxon>
        <taxon>Thiotrichales</taxon>
        <taxon>Francisellaceae</taxon>
        <taxon>Francisella</taxon>
    </lineage>
</organism>
<feature type="chain" id="PRO_0000270668" description="Large ribosomal subunit protein bL21">
    <location>
        <begin position="1"/>
        <end position="104"/>
    </location>
</feature>
<protein>
    <recommendedName>
        <fullName evidence="1">Large ribosomal subunit protein bL21</fullName>
    </recommendedName>
    <alternativeName>
        <fullName evidence="2">50S ribosomal protein L21</fullName>
    </alternativeName>
</protein>
<evidence type="ECO:0000255" key="1">
    <source>
        <dbReference type="HAMAP-Rule" id="MF_01363"/>
    </source>
</evidence>
<evidence type="ECO:0000305" key="2"/>
<proteinExistence type="inferred from homology"/>
<sequence>MYAIIKNGGKQYKVKEDEVVKLEKFDLGIGEKVEFDTVLMGQTAAGEVKIGAPTVAGAKVVGEVVEQGRHKKVKIMKFRRRKHSMKQQGHRQYFTAVKVSSISL</sequence>
<keyword id="KW-1185">Reference proteome</keyword>
<keyword id="KW-0687">Ribonucleoprotein</keyword>
<keyword id="KW-0689">Ribosomal protein</keyword>
<keyword id="KW-0694">RNA-binding</keyword>
<keyword id="KW-0699">rRNA-binding</keyword>
<gene>
    <name evidence="1" type="primary">rplU</name>
    <name type="ordered locus">FTT_0772</name>
</gene>
<reference key="1">
    <citation type="journal article" date="2005" name="Nat. Genet.">
        <title>The complete genome sequence of Francisella tularensis, the causative agent of tularemia.</title>
        <authorList>
            <person name="Larsson P."/>
            <person name="Oyston P.C.F."/>
            <person name="Chain P."/>
            <person name="Chu M.C."/>
            <person name="Duffield M."/>
            <person name="Fuxelius H.-H."/>
            <person name="Garcia E."/>
            <person name="Haelltorp G."/>
            <person name="Johansson D."/>
            <person name="Isherwood K.E."/>
            <person name="Karp P.D."/>
            <person name="Larsson E."/>
            <person name="Liu Y."/>
            <person name="Michell S."/>
            <person name="Prior J."/>
            <person name="Prior R."/>
            <person name="Malfatti S."/>
            <person name="Sjoestedt A."/>
            <person name="Svensson K."/>
            <person name="Thompson N."/>
            <person name="Vergez L."/>
            <person name="Wagg J.K."/>
            <person name="Wren B.W."/>
            <person name="Lindler L.E."/>
            <person name="Andersson S.G.E."/>
            <person name="Forsman M."/>
            <person name="Titball R.W."/>
        </authorList>
    </citation>
    <scope>NUCLEOTIDE SEQUENCE [LARGE SCALE GENOMIC DNA]</scope>
    <source>
        <strain>SCHU S4 / Schu 4</strain>
    </source>
</reference>
<dbReference type="EMBL" id="AJ749949">
    <property type="protein sequence ID" value="CAG45405.1"/>
    <property type="molecule type" value="Genomic_DNA"/>
</dbReference>
<dbReference type="RefSeq" id="WP_003020642.1">
    <property type="nucleotide sequence ID" value="NZ_CP010290.1"/>
</dbReference>
<dbReference type="RefSeq" id="YP_169780.1">
    <property type="nucleotide sequence ID" value="NC_006570.2"/>
</dbReference>
<dbReference type="SMR" id="Q5NGR2"/>
<dbReference type="STRING" id="177416.FTT_0772"/>
<dbReference type="DNASU" id="3192001"/>
<dbReference type="EnsemblBacteria" id="CAG45405">
    <property type="protein sequence ID" value="CAG45405"/>
    <property type="gene ID" value="FTT_0772"/>
</dbReference>
<dbReference type="KEGG" id="ftu:FTT_0772"/>
<dbReference type="eggNOG" id="COG0261">
    <property type="taxonomic scope" value="Bacteria"/>
</dbReference>
<dbReference type="OrthoDB" id="9813334at2"/>
<dbReference type="Proteomes" id="UP000001174">
    <property type="component" value="Chromosome"/>
</dbReference>
<dbReference type="GO" id="GO:0005737">
    <property type="term" value="C:cytoplasm"/>
    <property type="evidence" value="ECO:0007669"/>
    <property type="project" value="UniProtKB-ARBA"/>
</dbReference>
<dbReference type="GO" id="GO:1990904">
    <property type="term" value="C:ribonucleoprotein complex"/>
    <property type="evidence" value="ECO:0007669"/>
    <property type="project" value="UniProtKB-KW"/>
</dbReference>
<dbReference type="GO" id="GO:0005840">
    <property type="term" value="C:ribosome"/>
    <property type="evidence" value="ECO:0007669"/>
    <property type="project" value="UniProtKB-KW"/>
</dbReference>
<dbReference type="GO" id="GO:0019843">
    <property type="term" value="F:rRNA binding"/>
    <property type="evidence" value="ECO:0007669"/>
    <property type="project" value="UniProtKB-UniRule"/>
</dbReference>
<dbReference type="GO" id="GO:0003735">
    <property type="term" value="F:structural constituent of ribosome"/>
    <property type="evidence" value="ECO:0007669"/>
    <property type="project" value="InterPro"/>
</dbReference>
<dbReference type="GO" id="GO:0006412">
    <property type="term" value="P:translation"/>
    <property type="evidence" value="ECO:0007669"/>
    <property type="project" value="UniProtKB-UniRule"/>
</dbReference>
<dbReference type="HAMAP" id="MF_01363">
    <property type="entry name" value="Ribosomal_bL21"/>
    <property type="match status" value="1"/>
</dbReference>
<dbReference type="InterPro" id="IPR028909">
    <property type="entry name" value="bL21-like"/>
</dbReference>
<dbReference type="InterPro" id="IPR036164">
    <property type="entry name" value="bL21-like_sf"/>
</dbReference>
<dbReference type="InterPro" id="IPR001787">
    <property type="entry name" value="Ribosomal_bL21"/>
</dbReference>
<dbReference type="InterPro" id="IPR018258">
    <property type="entry name" value="Ribosomal_bL21_CS"/>
</dbReference>
<dbReference type="NCBIfam" id="TIGR00061">
    <property type="entry name" value="L21"/>
    <property type="match status" value="1"/>
</dbReference>
<dbReference type="PANTHER" id="PTHR21349">
    <property type="entry name" value="50S RIBOSOMAL PROTEIN L21"/>
    <property type="match status" value="1"/>
</dbReference>
<dbReference type="PANTHER" id="PTHR21349:SF0">
    <property type="entry name" value="LARGE RIBOSOMAL SUBUNIT PROTEIN BL21M"/>
    <property type="match status" value="1"/>
</dbReference>
<dbReference type="Pfam" id="PF00829">
    <property type="entry name" value="Ribosomal_L21p"/>
    <property type="match status" value="1"/>
</dbReference>
<dbReference type="SUPFAM" id="SSF141091">
    <property type="entry name" value="L21p-like"/>
    <property type="match status" value="1"/>
</dbReference>
<dbReference type="PROSITE" id="PS01169">
    <property type="entry name" value="RIBOSOMAL_L21"/>
    <property type="match status" value="1"/>
</dbReference>
<name>RL21_FRATT</name>
<accession>Q5NGR2</accession>
<comment type="function">
    <text evidence="1">This protein binds to 23S rRNA in the presence of protein L20.</text>
</comment>
<comment type="subunit">
    <text evidence="1">Part of the 50S ribosomal subunit. Contacts protein L20.</text>
</comment>
<comment type="similarity">
    <text evidence="1">Belongs to the bacterial ribosomal protein bL21 family.</text>
</comment>